<accession>Q5HTL9</accession>
<organism>
    <name type="scientific">Campylobacter jejuni (strain RM1221)</name>
    <dbReference type="NCBI Taxonomy" id="195099"/>
    <lineage>
        <taxon>Bacteria</taxon>
        <taxon>Pseudomonadati</taxon>
        <taxon>Campylobacterota</taxon>
        <taxon>Epsilonproteobacteria</taxon>
        <taxon>Campylobacterales</taxon>
        <taxon>Campylobacteraceae</taxon>
        <taxon>Campylobacter</taxon>
    </lineage>
</organism>
<sequence length="340" mass="38908">MIFIDACFKKPTPYTPIWMMRQAGRYLPEYMEVRKQAGDFLSLCKDYKKASEVSLQPIDILDVDAAIIFSDILVVPLEMGMNLRFEKGEGPVFDNPISTLEDLEKLDDQNAHKKLNYVYDALKLTREKLSQNKALIGFCGSPWTIATYMIEGSGSKNYAKCKKMLYQNPELLHKILNKLTQVLKLYLEEQIKAGANAIQIFDSWASALEYDKFFEFSFNYMLEISNFIKSKYPNIPVILFPKGISGYLDRIDGNFDVFGVDWSTPLDLARDKLSHKYTLQGNMEPCRLYDKNAIKEGVGKILKTMQNKAHIFNLGHGILPDIPVENAKYFIKLVQESSAK</sequence>
<comment type="function">
    <text evidence="1">Catalyzes the decarboxylation of four acetate groups of uroporphyrinogen-III to yield coproporphyrinogen-III.</text>
</comment>
<comment type="catalytic activity">
    <reaction evidence="1">
        <text>uroporphyrinogen III + 4 H(+) = coproporphyrinogen III + 4 CO2</text>
        <dbReference type="Rhea" id="RHEA:19865"/>
        <dbReference type="ChEBI" id="CHEBI:15378"/>
        <dbReference type="ChEBI" id="CHEBI:16526"/>
        <dbReference type="ChEBI" id="CHEBI:57308"/>
        <dbReference type="ChEBI" id="CHEBI:57309"/>
        <dbReference type="EC" id="4.1.1.37"/>
    </reaction>
</comment>
<comment type="pathway">
    <text evidence="1">Porphyrin-containing compound metabolism; protoporphyrin-IX biosynthesis; coproporphyrinogen-III from 5-aminolevulinate: step 4/4.</text>
</comment>
<comment type="subunit">
    <text evidence="1">Homodimer.</text>
</comment>
<comment type="subcellular location">
    <subcellularLocation>
        <location evidence="1">Cytoplasm</location>
    </subcellularLocation>
</comment>
<comment type="similarity">
    <text evidence="1">Belongs to the uroporphyrinogen decarboxylase family.</text>
</comment>
<feature type="chain" id="PRO_1000023893" description="Uroporphyrinogen decarboxylase">
    <location>
        <begin position="1"/>
        <end position="340"/>
    </location>
</feature>
<feature type="binding site" evidence="1">
    <location>
        <begin position="21"/>
        <end position="25"/>
    </location>
    <ligand>
        <name>substrate</name>
    </ligand>
</feature>
<feature type="binding site" evidence="1">
    <location>
        <position position="71"/>
    </location>
    <ligand>
        <name>substrate</name>
    </ligand>
</feature>
<feature type="binding site" evidence="1">
    <location>
        <position position="148"/>
    </location>
    <ligand>
        <name>substrate</name>
    </ligand>
</feature>
<feature type="binding site" evidence="1">
    <location>
        <position position="203"/>
    </location>
    <ligand>
        <name>substrate</name>
    </ligand>
</feature>
<feature type="binding site" evidence="1">
    <location>
        <position position="316"/>
    </location>
    <ligand>
        <name>substrate</name>
    </ligand>
</feature>
<feature type="site" description="Transition state stabilizer" evidence="1">
    <location>
        <position position="71"/>
    </location>
</feature>
<proteinExistence type="inferred from homology"/>
<evidence type="ECO:0000255" key="1">
    <source>
        <dbReference type="HAMAP-Rule" id="MF_00218"/>
    </source>
</evidence>
<dbReference type="EC" id="4.1.1.37" evidence="1"/>
<dbReference type="EMBL" id="CP000025">
    <property type="protein sequence ID" value="AAW35699.1"/>
    <property type="molecule type" value="Genomic_DNA"/>
</dbReference>
<dbReference type="RefSeq" id="WP_002859305.1">
    <property type="nucleotide sequence ID" value="NC_003912.7"/>
</dbReference>
<dbReference type="SMR" id="Q5HTL9"/>
<dbReference type="KEGG" id="cjr:CJE1379"/>
<dbReference type="HOGENOM" id="CLU_040933_0_0_7"/>
<dbReference type="UniPathway" id="UPA00251">
    <property type="reaction ID" value="UER00321"/>
</dbReference>
<dbReference type="GO" id="GO:0005829">
    <property type="term" value="C:cytosol"/>
    <property type="evidence" value="ECO:0007669"/>
    <property type="project" value="TreeGrafter"/>
</dbReference>
<dbReference type="GO" id="GO:0004853">
    <property type="term" value="F:uroporphyrinogen decarboxylase activity"/>
    <property type="evidence" value="ECO:0007669"/>
    <property type="project" value="UniProtKB-UniRule"/>
</dbReference>
<dbReference type="GO" id="GO:0019353">
    <property type="term" value="P:protoporphyrinogen IX biosynthetic process from glutamate"/>
    <property type="evidence" value="ECO:0007669"/>
    <property type="project" value="TreeGrafter"/>
</dbReference>
<dbReference type="CDD" id="cd00717">
    <property type="entry name" value="URO-D"/>
    <property type="match status" value="1"/>
</dbReference>
<dbReference type="FunFam" id="3.20.20.210:FF:000007">
    <property type="entry name" value="Uroporphyrinogen decarboxylase"/>
    <property type="match status" value="1"/>
</dbReference>
<dbReference type="Gene3D" id="3.20.20.210">
    <property type="match status" value="1"/>
</dbReference>
<dbReference type="HAMAP" id="MF_00218">
    <property type="entry name" value="URO_D"/>
    <property type="match status" value="1"/>
</dbReference>
<dbReference type="InterPro" id="IPR038071">
    <property type="entry name" value="UROD/MetE-like_sf"/>
</dbReference>
<dbReference type="InterPro" id="IPR006361">
    <property type="entry name" value="Uroporphyrinogen_deCO2ase_HemE"/>
</dbReference>
<dbReference type="InterPro" id="IPR000257">
    <property type="entry name" value="Uroporphyrinogen_deCOase"/>
</dbReference>
<dbReference type="NCBIfam" id="TIGR01464">
    <property type="entry name" value="hemE"/>
    <property type="match status" value="1"/>
</dbReference>
<dbReference type="PANTHER" id="PTHR21091">
    <property type="entry name" value="METHYLTETRAHYDROFOLATE:HOMOCYSTEINE METHYLTRANSFERASE RELATED"/>
    <property type="match status" value="1"/>
</dbReference>
<dbReference type="PANTHER" id="PTHR21091:SF169">
    <property type="entry name" value="UROPORPHYRINOGEN DECARBOXYLASE"/>
    <property type="match status" value="1"/>
</dbReference>
<dbReference type="Pfam" id="PF01208">
    <property type="entry name" value="URO-D"/>
    <property type="match status" value="1"/>
</dbReference>
<dbReference type="SUPFAM" id="SSF51726">
    <property type="entry name" value="UROD/MetE-like"/>
    <property type="match status" value="1"/>
</dbReference>
<dbReference type="PROSITE" id="PS00906">
    <property type="entry name" value="UROD_1"/>
    <property type="match status" value="1"/>
</dbReference>
<dbReference type="PROSITE" id="PS00907">
    <property type="entry name" value="UROD_2"/>
    <property type="match status" value="1"/>
</dbReference>
<keyword id="KW-0963">Cytoplasm</keyword>
<keyword id="KW-0210">Decarboxylase</keyword>
<keyword id="KW-0456">Lyase</keyword>
<keyword id="KW-0627">Porphyrin biosynthesis</keyword>
<reference key="1">
    <citation type="journal article" date="2005" name="PLoS Biol.">
        <title>Major structural differences and novel potential virulence mechanisms from the genomes of multiple Campylobacter species.</title>
        <authorList>
            <person name="Fouts D.E."/>
            <person name="Mongodin E.F."/>
            <person name="Mandrell R.E."/>
            <person name="Miller W.G."/>
            <person name="Rasko D.A."/>
            <person name="Ravel J."/>
            <person name="Brinkac L.M."/>
            <person name="DeBoy R.T."/>
            <person name="Parker C.T."/>
            <person name="Daugherty S.C."/>
            <person name="Dodson R.J."/>
            <person name="Durkin A.S."/>
            <person name="Madupu R."/>
            <person name="Sullivan S.A."/>
            <person name="Shetty J.U."/>
            <person name="Ayodeji M.A."/>
            <person name="Shvartsbeyn A."/>
            <person name="Schatz M.C."/>
            <person name="Badger J.H."/>
            <person name="Fraser C.M."/>
            <person name="Nelson K.E."/>
        </authorList>
    </citation>
    <scope>NUCLEOTIDE SEQUENCE [LARGE SCALE GENOMIC DNA]</scope>
    <source>
        <strain>RM1221</strain>
    </source>
</reference>
<gene>
    <name evidence="1" type="primary">hemE</name>
    <name type="ordered locus">CJE1379</name>
</gene>
<protein>
    <recommendedName>
        <fullName evidence="1">Uroporphyrinogen decarboxylase</fullName>
        <shortName evidence="1">UPD</shortName>
        <shortName evidence="1">URO-D</shortName>
        <ecNumber evidence="1">4.1.1.37</ecNumber>
    </recommendedName>
</protein>
<name>DCUP_CAMJR</name>